<dbReference type="EMBL" id="AM040264">
    <property type="protein sequence ID" value="CAJ10367.1"/>
    <property type="molecule type" value="Genomic_DNA"/>
</dbReference>
<dbReference type="RefSeq" id="WP_002963543.1">
    <property type="nucleotide sequence ID" value="NZ_KN046823.1"/>
</dbReference>
<dbReference type="SMR" id="Q2YM92"/>
<dbReference type="STRING" id="359391.BAB1_0411"/>
<dbReference type="KEGG" id="bmf:BAB1_0411"/>
<dbReference type="PATRIC" id="fig|359391.11.peg.2455"/>
<dbReference type="HOGENOM" id="CLU_041018_0_2_5"/>
<dbReference type="PhylomeDB" id="Q2YM92"/>
<dbReference type="Proteomes" id="UP000002719">
    <property type="component" value="Chromosome I"/>
</dbReference>
<dbReference type="GO" id="GO:0005886">
    <property type="term" value="C:plasma membrane"/>
    <property type="evidence" value="ECO:0007669"/>
    <property type="project" value="UniProtKB-SubCell"/>
</dbReference>
<dbReference type="GO" id="GO:0045259">
    <property type="term" value="C:proton-transporting ATP synthase complex"/>
    <property type="evidence" value="ECO:0007669"/>
    <property type="project" value="UniProtKB-KW"/>
</dbReference>
<dbReference type="GO" id="GO:0046933">
    <property type="term" value="F:proton-transporting ATP synthase activity, rotational mechanism"/>
    <property type="evidence" value="ECO:0007669"/>
    <property type="project" value="UniProtKB-UniRule"/>
</dbReference>
<dbReference type="CDD" id="cd00310">
    <property type="entry name" value="ATP-synt_Fo_a_6"/>
    <property type="match status" value="1"/>
</dbReference>
<dbReference type="FunFam" id="1.20.120.220:FF:000003">
    <property type="entry name" value="ATP synthase subunit a"/>
    <property type="match status" value="1"/>
</dbReference>
<dbReference type="Gene3D" id="1.20.120.220">
    <property type="entry name" value="ATP synthase, F0 complex, subunit A"/>
    <property type="match status" value="1"/>
</dbReference>
<dbReference type="HAMAP" id="MF_01393">
    <property type="entry name" value="ATP_synth_a_bact"/>
    <property type="match status" value="1"/>
</dbReference>
<dbReference type="InterPro" id="IPR000568">
    <property type="entry name" value="ATP_synth_F0_asu"/>
</dbReference>
<dbReference type="InterPro" id="IPR023011">
    <property type="entry name" value="ATP_synth_F0_asu_AS"/>
</dbReference>
<dbReference type="InterPro" id="IPR045083">
    <property type="entry name" value="ATP_synth_F0_asu_bact/mt"/>
</dbReference>
<dbReference type="InterPro" id="IPR035908">
    <property type="entry name" value="F0_ATP_A_sf"/>
</dbReference>
<dbReference type="NCBIfam" id="TIGR01131">
    <property type="entry name" value="ATP_synt_6_or_A"/>
    <property type="match status" value="1"/>
</dbReference>
<dbReference type="NCBIfam" id="NF004482">
    <property type="entry name" value="PRK05815.2-4"/>
    <property type="match status" value="1"/>
</dbReference>
<dbReference type="PANTHER" id="PTHR11410">
    <property type="entry name" value="ATP SYNTHASE SUBUNIT A"/>
    <property type="match status" value="1"/>
</dbReference>
<dbReference type="PANTHER" id="PTHR11410:SF0">
    <property type="entry name" value="ATP SYNTHASE SUBUNIT A"/>
    <property type="match status" value="1"/>
</dbReference>
<dbReference type="Pfam" id="PF00119">
    <property type="entry name" value="ATP-synt_A"/>
    <property type="match status" value="1"/>
</dbReference>
<dbReference type="PRINTS" id="PR00123">
    <property type="entry name" value="ATPASEA"/>
</dbReference>
<dbReference type="SUPFAM" id="SSF81336">
    <property type="entry name" value="F1F0 ATP synthase subunit A"/>
    <property type="match status" value="1"/>
</dbReference>
<dbReference type="PROSITE" id="PS00449">
    <property type="entry name" value="ATPASE_A"/>
    <property type="match status" value="1"/>
</dbReference>
<protein>
    <recommendedName>
        <fullName evidence="1">ATP synthase subunit a</fullName>
    </recommendedName>
    <alternativeName>
        <fullName evidence="1">ATP synthase F0 sector subunit a</fullName>
    </alternativeName>
    <alternativeName>
        <fullName evidence="1">F-ATPase subunit 6</fullName>
    </alternativeName>
</protein>
<accession>Q2YM92</accession>
<gene>
    <name evidence="1" type="primary">atpB</name>
    <name type="ordered locus">BAB1_0411</name>
</gene>
<keyword id="KW-0066">ATP synthesis</keyword>
<keyword id="KW-0997">Cell inner membrane</keyword>
<keyword id="KW-1003">Cell membrane</keyword>
<keyword id="KW-0138">CF(0)</keyword>
<keyword id="KW-0375">Hydrogen ion transport</keyword>
<keyword id="KW-0406">Ion transport</keyword>
<keyword id="KW-0472">Membrane</keyword>
<keyword id="KW-1185">Reference proteome</keyword>
<keyword id="KW-0812">Transmembrane</keyword>
<keyword id="KW-1133">Transmembrane helix</keyword>
<keyword id="KW-0813">Transport</keyword>
<organism>
    <name type="scientific">Brucella abortus (strain 2308)</name>
    <dbReference type="NCBI Taxonomy" id="359391"/>
    <lineage>
        <taxon>Bacteria</taxon>
        <taxon>Pseudomonadati</taxon>
        <taxon>Pseudomonadota</taxon>
        <taxon>Alphaproteobacteria</taxon>
        <taxon>Hyphomicrobiales</taxon>
        <taxon>Brucellaceae</taxon>
        <taxon>Brucella/Ochrobactrum group</taxon>
        <taxon>Brucella</taxon>
    </lineage>
</organism>
<sequence>MANDPIHQFQVSRWIPIDVGGVDLSFTNVSAFMVATVVLASGFLYLTSSGRGLIPTRLQSVSEMAYEFVATSLRDSAGSKGMKFFPFVFSLFMFVLVANFIGLFPYFYTVTSQIIVTFALSLLVIGTVIFYGFFKHGFGFLKLFVPSGVPGIIVPLVVLIEIISFLSRPISLSVRLFANMLAGHITLKVFAGFVVSLSSLGALGIGGAVLPLLMTVAITALEFLVAFLQAYVFTVLTCMYINDAVHPGH</sequence>
<proteinExistence type="inferred from homology"/>
<feature type="chain" id="PRO_0000362253" description="ATP synthase subunit a">
    <location>
        <begin position="1"/>
        <end position="249"/>
    </location>
</feature>
<feature type="transmembrane region" description="Helical" evidence="1">
    <location>
        <begin position="26"/>
        <end position="46"/>
    </location>
</feature>
<feature type="transmembrane region" description="Helical" evidence="1">
    <location>
        <begin position="84"/>
        <end position="104"/>
    </location>
</feature>
<feature type="transmembrane region" description="Helical" evidence="1">
    <location>
        <begin position="114"/>
        <end position="134"/>
    </location>
</feature>
<feature type="transmembrane region" description="Helical" evidence="1">
    <location>
        <begin position="143"/>
        <end position="163"/>
    </location>
</feature>
<feature type="transmembrane region" description="Helical" evidence="1">
    <location>
        <begin position="185"/>
        <end position="205"/>
    </location>
</feature>
<feature type="transmembrane region" description="Helical" evidence="1">
    <location>
        <begin position="208"/>
        <end position="228"/>
    </location>
</feature>
<comment type="function">
    <text evidence="1">Key component of the proton channel; it plays a direct role in the translocation of protons across the membrane.</text>
</comment>
<comment type="subunit">
    <text evidence="1">F-type ATPases have 2 components, CF(1) - the catalytic core - and CF(0) - the membrane proton channel. CF(1) has five subunits: alpha(3), beta(3), gamma(1), delta(1), epsilon(1). CF(0) has three main subunits: a(1), b(2) and c(9-12). The alpha and beta chains form an alternating ring which encloses part of the gamma chain. CF(1) is attached to CF(0) by a central stalk formed by the gamma and epsilon chains, while a peripheral stalk is formed by the delta and b chains.</text>
</comment>
<comment type="subcellular location">
    <subcellularLocation>
        <location evidence="1">Cell inner membrane</location>
        <topology evidence="1">Multi-pass membrane protein</topology>
    </subcellularLocation>
</comment>
<comment type="similarity">
    <text evidence="1">Belongs to the ATPase A chain family.</text>
</comment>
<evidence type="ECO:0000255" key="1">
    <source>
        <dbReference type="HAMAP-Rule" id="MF_01393"/>
    </source>
</evidence>
<reference key="1">
    <citation type="journal article" date="2005" name="Infect. Immun.">
        <title>Whole-genome analyses of speciation events in pathogenic Brucellae.</title>
        <authorList>
            <person name="Chain P.S."/>
            <person name="Comerci D.J."/>
            <person name="Tolmasky M.E."/>
            <person name="Larimer F.W."/>
            <person name="Malfatti S.A."/>
            <person name="Vergez L.M."/>
            <person name="Aguero F."/>
            <person name="Land M.L."/>
            <person name="Ugalde R.A."/>
            <person name="Garcia E."/>
        </authorList>
    </citation>
    <scope>NUCLEOTIDE SEQUENCE [LARGE SCALE GENOMIC DNA]</scope>
    <source>
        <strain>2308</strain>
    </source>
</reference>
<name>ATP6_BRUA2</name>